<dbReference type="EC" id="3.2.2.-" evidence="3 4"/>
<dbReference type="EC" id="3.2.2.29" evidence="3 4"/>
<dbReference type="EMBL" id="X68366">
    <property type="protein sequence ID" value="CAA48433.1"/>
    <property type="molecule type" value="Genomic_DNA"/>
</dbReference>
<dbReference type="PIR" id="S30312">
    <property type="entry name" value="S30312"/>
</dbReference>
<dbReference type="RefSeq" id="NP_039762.1">
    <property type="nucleotide sequence ID" value="NC_001336.1"/>
</dbReference>
<dbReference type="RefSeq" id="WP_010889848.1">
    <property type="nucleotide sequence ID" value="NC_001336.1"/>
</dbReference>
<dbReference type="PDB" id="1KEA">
    <property type="method" value="X-ray"/>
    <property type="resolution" value="2.00 A"/>
    <property type="chains" value="A=1-221"/>
</dbReference>
<dbReference type="PDBsum" id="1KEA"/>
<dbReference type="SMR" id="P29588"/>
<dbReference type="REBASE" id="6523">
    <property type="entry name" value="V.MthTI"/>
</dbReference>
<dbReference type="EvolutionaryTrace" id="P29588"/>
<dbReference type="GO" id="GO:0051539">
    <property type="term" value="F:4 iron, 4 sulfur cluster binding"/>
    <property type="evidence" value="ECO:0007669"/>
    <property type="project" value="UniProtKB-KW"/>
</dbReference>
<dbReference type="GO" id="GO:0034039">
    <property type="term" value="F:8-oxo-7,8-dihydroguanine DNA N-glycosylase activity"/>
    <property type="evidence" value="ECO:0007669"/>
    <property type="project" value="TreeGrafter"/>
</dbReference>
<dbReference type="GO" id="GO:0035485">
    <property type="term" value="F:adenine/guanine mispair binding"/>
    <property type="evidence" value="ECO:0007669"/>
    <property type="project" value="TreeGrafter"/>
</dbReference>
<dbReference type="GO" id="GO:0141016">
    <property type="term" value="F:G/T mismatch-specific thymine-DNA glycosylase activity"/>
    <property type="evidence" value="ECO:0007669"/>
    <property type="project" value="UniProtKB-EC"/>
</dbReference>
<dbReference type="GO" id="GO:0046872">
    <property type="term" value="F:metal ion binding"/>
    <property type="evidence" value="ECO:0007669"/>
    <property type="project" value="UniProtKB-KW"/>
</dbReference>
<dbReference type="GO" id="GO:0032357">
    <property type="term" value="F:oxidized purine DNA binding"/>
    <property type="evidence" value="ECO:0007669"/>
    <property type="project" value="TreeGrafter"/>
</dbReference>
<dbReference type="GO" id="GO:0000701">
    <property type="term" value="F:purine-specific mismatch base pair DNA N-glycosylase activity"/>
    <property type="evidence" value="ECO:0007669"/>
    <property type="project" value="TreeGrafter"/>
</dbReference>
<dbReference type="GO" id="GO:0006284">
    <property type="term" value="P:base-excision repair"/>
    <property type="evidence" value="ECO:0007669"/>
    <property type="project" value="InterPro"/>
</dbReference>
<dbReference type="GO" id="GO:0006298">
    <property type="term" value="P:mismatch repair"/>
    <property type="evidence" value="ECO:0007669"/>
    <property type="project" value="TreeGrafter"/>
</dbReference>
<dbReference type="CDD" id="cd00056">
    <property type="entry name" value="ENDO3c"/>
    <property type="match status" value="1"/>
</dbReference>
<dbReference type="FunFam" id="1.10.340.30:FF:000001">
    <property type="entry name" value="Endonuclease III"/>
    <property type="match status" value="1"/>
</dbReference>
<dbReference type="Gene3D" id="1.10.1670.10">
    <property type="entry name" value="Helix-hairpin-Helix base-excision DNA repair enzymes (C-terminal)"/>
    <property type="match status" value="1"/>
</dbReference>
<dbReference type="Gene3D" id="1.10.340.30">
    <property type="entry name" value="Hypothetical protein, domain 2"/>
    <property type="match status" value="1"/>
</dbReference>
<dbReference type="InterPro" id="IPR011257">
    <property type="entry name" value="DNA_glycosylase"/>
</dbReference>
<dbReference type="InterPro" id="IPR004036">
    <property type="entry name" value="Endonuclease-III-like_CS2"/>
</dbReference>
<dbReference type="InterPro" id="IPR003651">
    <property type="entry name" value="Endonuclease3_FeS-loop_motif"/>
</dbReference>
<dbReference type="InterPro" id="IPR004035">
    <property type="entry name" value="Endouclease-III_FeS-bd_BS"/>
</dbReference>
<dbReference type="InterPro" id="IPR003265">
    <property type="entry name" value="HhH-GPD_domain"/>
</dbReference>
<dbReference type="InterPro" id="IPR023170">
    <property type="entry name" value="HhH_base_excis_C"/>
</dbReference>
<dbReference type="InterPro" id="IPR044298">
    <property type="entry name" value="MIG/MutY"/>
</dbReference>
<dbReference type="PANTHER" id="PTHR42944">
    <property type="entry name" value="ADENINE DNA GLYCOSYLASE"/>
    <property type="match status" value="1"/>
</dbReference>
<dbReference type="PANTHER" id="PTHR42944:SF1">
    <property type="entry name" value="ADENINE DNA GLYCOSYLASE"/>
    <property type="match status" value="1"/>
</dbReference>
<dbReference type="Pfam" id="PF00730">
    <property type="entry name" value="HhH-GPD"/>
    <property type="match status" value="1"/>
</dbReference>
<dbReference type="PIRSF" id="PIRSF001435">
    <property type="entry name" value="Nth"/>
    <property type="match status" value="1"/>
</dbReference>
<dbReference type="SMART" id="SM00478">
    <property type="entry name" value="ENDO3c"/>
    <property type="match status" value="1"/>
</dbReference>
<dbReference type="SMART" id="SM00525">
    <property type="entry name" value="FES"/>
    <property type="match status" value="1"/>
</dbReference>
<dbReference type="SUPFAM" id="SSF48150">
    <property type="entry name" value="DNA-glycosylase"/>
    <property type="match status" value="1"/>
</dbReference>
<dbReference type="PROSITE" id="PS00764">
    <property type="entry name" value="ENDONUCLEASE_III_1"/>
    <property type="match status" value="1"/>
</dbReference>
<dbReference type="PROSITE" id="PS01155">
    <property type="entry name" value="ENDONUCLEASE_III_2"/>
    <property type="match status" value="1"/>
</dbReference>
<proteinExistence type="evidence at protein level"/>
<geneLocation type="plasmid">
    <name>pFV1</name>
</geneLocation>
<gene>
    <name evidence="7" type="primary">mig</name>
</gene>
<protein>
    <recommendedName>
        <fullName evidence="8">Thymine/uracil-DNA glycosylase</fullName>
        <ecNumber evidence="3 4">3.2.2.-</ecNumber>
        <ecNumber evidence="3 4">3.2.2.29</ecNumber>
    </recommendedName>
    <alternativeName>
        <fullName evidence="7">DNA mismatch glycosylase</fullName>
        <shortName evidence="5">MIG</shortName>
    </alternativeName>
    <alternativeName>
        <fullName evidence="8">G/T mismatches repair enzyme</fullName>
    </alternativeName>
    <alternativeName>
        <fullName evidence="6">Type II nicking enzyme V.MthTI</fullName>
        <shortName evidence="6">V.MthTI</shortName>
    </alternativeName>
</protein>
<feature type="chain" id="PRO_0000102237" description="Thymine/uracil-DNA glycosylase">
    <location>
        <begin position="1"/>
        <end position="221"/>
    </location>
</feature>
<feature type="domain" description="HhH">
    <location>
        <begin position="105"/>
        <end position="133"/>
    </location>
</feature>
<feature type="binding site" evidence="1">
    <location>
        <position position="197"/>
    </location>
    <ligand>
        <name>[4Fe-4S] cluster</name>
        <dbReference type="ChEBI" id="CHEBI:49883"/>
    </ligand>
</feature>
<feature type="binding site" evidence="1">
    <location>
        <position position="204"/>
    </location>
    <ligand>
        <name>[4Fe-4S] cluster</name>
        <dbReference type="ChEBI" id="CHEBI:49883"/>
    </ligand>
</feature>
<feature type="binding site" evidence="1">
    <location>
        <position position="207"/>
    </location>
    <ligand>
        <name>[4Fe-4S] cluster</name>
        <dbReference type="ChEBI" id="CHEBI:49883"/>
    </ligand>
</feature>
<feature type="binding site" evidence="1">
    <location>
        <position position="213"/>
    </location>
    <ligand>
        <name>[4Fe-4S] cluster</name>
        <dbReference type="ChEBI" id="CHEBI:49883"/>
    </ligand>
</feature>
<feature type="mutagenesis site" description="5-fold lower activity." evidence="2">
    <original>E</original>
    <variation>D</variation>
    <location>
        <position position="42"/>
    </location>
</feature>
<feature type="mutagenesis site" description="25-fold lower activity." evidence="2">
    <original>E</original>
    <variation>S</variation>
    <location>
        <position position="42"/>
    </location>
</feature>
<feature type="mutagenesis site" description="15-fold lower activity." evidence="2">
    <original>R</original>
    <variation>A</variation>
    <location>
        <position position="47"/>
    </location>
</feature>
<feature type="mutagenesis site" description="Affects T/G versus U/G selectivity. Changes substrate discrimination between T/G and A/G by a factor of 117 in favor of the latter; when associated with Q-187." evidence="3">
    <original>A</original>
    <variation>V</variation>
    <location>
        <position position="50"/>
    </location>
</feature>
<feature type="mutagenesis site" description="60-fold lower activity." evidence="2">
    <original>Y</original>
    <variation>F</variation>
    <location>
        <position position="126"/>
    </location>
</feature>
<feature type="mutagenesis site" description="No activity." evidence="2">
    <original>Y</original>
    <variation>K</variation>
    <location>
        <position position="126"/>
    </location>
</feature>
<feature type="mutagenesis site" description="Almost no activity." evidence="2">
    <original>Y</original>
    <variation>S</variation>
    <location>
        <position position="126"/>
    </location>
</feature>
<feature type="mutagenesis site" description="15-fold lower activity." evidence="2">
    <original>D</original>
    <variation>A</variation>
    <location>
        <position position="144"/>
    </location>
</feature>
<feature type="mutagenesis site" description="No activity." evidence="2">
    <original>D</original>
    <variation>N</variation>
    <location>
        <position position="144"/>
    </location>
</feature>
<feature type="mutagenesis site" description="Almost no activity." evidence="2">
    <original>N</original>
    <variation>E</variation>
    <variation>H</variation>
    <location>
        <position position="146"/>
    </location>
</feature>
<feature type="mutagenesis site" description="Accelerates the A/G reaction and decreases activity on T/G and U/G. Changes substrate discrimination between T/G and A/G by a factor of 117 in favor of the latter; when associated with V-50." evidence="3">
    <original>L</original>
    <variation>Q</variation>
    <location>
        <position position="187"/>
    </location>
</feature>
<feature type="helix" evidence="9">
    <location>
        <begin position="5"/>
        <end position="22"/>
    </location>
</feature>
<feature type="helix" evidence="9">
    <location>
        <begin position="28"/>
        <end position="31"/>
    </location>
</feature>
<feature type="helix" evidence="9">
    <location>
        <begin position="35"/>
        <end position="44"/>
    </location>
</feature>
<feature type="turn" evidence="9">
    <location>
        <begin position="45"/>
        <end position="47"/>
    </location>
</feature>
<feature type="helix" evidence="9">
    <location>
        <begin position="50"/>
        <end position="63"/>
    </location>
</feature>
<feature type="helix" evidence="9">
    <location>
        <begin position="67"/>
        <end position="72"/>
    </location>
</feature>
<feature type="helix" evidence="9">
    <location>
        <begin position="75"/>
        <end position="81"/>
    </location>
</feature>
<feature type="helix" evidence="9">
    <location>
        <begin position="83"/>
        <end position="85"/>
    </location>
</feature>
<feature type="helix" evidence="9">
    <location>
        <begin position="88"/>
        <end position="106"/>
    </location>
</feature>
<feature type="helix" evidence="9">
    <location>
        <begin position="114"/>
        <end position="118"/>
    </location>
</feature>
<feature type="helix" evidence="9">
    <location>
        <begin position="125"/>
        <end position="134"/>
    </location>
</feature>
<feature type="helix" evidence="9">
    <location>
        <begin position="145"/>
        <end position="155"/>
    </location>
</feature>
<feature type="helix" evidence="9">
    <location>
        <begin position="157"/>
        <end position="159"/>
    </location>
</feature>
<feature type="helix" evidence="9">
    <location>
        <begin position="167"/>
        <end position="176"/>
    </location>
</feature>
<feature type="helix" evidence="9">
    <location>
        <begin position="182"/>
        <end position="195"/>
    </location>
</feature>
<feature type="strand" evidence="9">
    <location>
        <begin position="199"/>
        <end position="201"/>
    </location>
</feature>
<feature type="helix" evidence="9">
    <location>
        <begin position="204"/>
        <end position="206"/>
    </location>
</feature>
<feature type="turn" evidence="9">
    <location>
        <begin position="208"/>
        <end position="212"/>
    </location>
</feature>
<feature type="helix" evidence="9">
    <location>
        <begin position="214"/>
        <end position="217"/>
    </location>
</feature>
<name>MIG_METTF</name>
<reference key="1">
    <citation type="journal article" date="1992" name="Nucleic Acids Res.">
        <title>Modular organization of related Archaeal plasmids encoding different restriction-modification systems in Methanobacterium thermoformicicum.</title>
        <authorList>
            <person name="Noelling J."/>
            <person name="van Eeden F.J.M."/>
            <person name="Eggen R.I.L."/>
            <person name="de Vos W.M."/>
        </authorList>
    </citation>
    <scope>NUCLEOTIDE SEQUENCE [GENOMIC DNA]</scope>
    <source>
        <strain>DSM 3848 / THF</strain>
    </source>
</reference>
<reference key="2">
    <citation type="journal article" date="1996" name="EMBO J.">
        <title>Counteracting the mutagenic effect of hydrolytic deamination of DNA 5-methylcytosine residues at high temperature: DNA mismatch N-glycosylase Mig.Mth of the thermophilic archaeon Methanobacterium thermoautotrophicum THF.</title>
        <authorList>
            <person name="Horst J.P."/>
            <person name="Fritz H.J."/>
        </authorList>
    </citation>
    <scope>FUNCTION</scope>
    <scope>CATALYTIC ACTIVITY</scope>
    <source>
        <strain>DSM 3848 / THF</strain>
    </source>
</reference>
<reference key="3">
    <citation type="journal article" date="2002" name="Nucleic Acids Res.">
        <title>Two amino acid replacements change the substrate preference of DNA mismatch glycosylase Mig.MthI from T/G to A/G.</title>
        <authorList>
            <person name="Fondufe-Mittendorf Y.N."/>
            <person name="Haerer C."/>
            <person name="Kramer W."/>
            <person name="Fritz H.J."/>
        </authorList>
    </citation>
    <scope>FUNCTION</scope>
    <scope>CATALYTIC ACTIVITY</scope>
    <scope>MUTAGENESIS OF ALA-50 AND LEU-187</scope>
</reference>
<reference key="4">
    <citation type="journal article" date="2003" name="Nucleic Acids Res.">
        <title>A nomenclature for restriction enzymes, DNA methyltransferases, homing endonucleases and their genes.</title>
        <authorList>
            <person name="Roberts R.J."/>
            <person name="Belfort M."/>
            <person name="Bestor T."/>
            <person name="Bhagwat A.S."/>
            <person name="Bickle T.A."/>
            <person name="Bitinaite J."/>
            <person name="Blumenthal R.M."/>
            <person name="Degtyarev S.K."/>
            <person name="Dryden D.T."/>
            <person name="Dybvig K."/>
            <person name="Firman K."/>
            <person name="Gromova E.S."/>
            <person name="Gumport R.I."/>
            <person name="Halford S.E."/>
            <person name="Hattman S."/>
            <person name="Heitman J."/>
            <person name="Hornby D.P."/>
            <person name="Janulaitis A."/>
            <person name="Jeltsch A."/>
            <person name="Josephsen J."/>
            <person name="Kiss A."/>
            <person name="Klaenhammer T.R."/>
            <person name="Kobayashi I."/>
            <person name="Kong H."/>
            <person name="Krueger D.H."/>
            <person name="Lacks S."/>
            <person name="Marinus M.G."/>
            <person name="Miyahara M."/>
            <person name="Morgan R.D."/>
            <person name="Murray N.E."/>
            <person name="Nagaraja V."/>
            <person name="Piekarowicz A."/>
            <person name="Pingoud A."/>
            <person name="Raleigh E."/>
            <person name="Rao D.N."/>
            <person name="Reich N."/>
            <person name="Repin V.E."/>
            <person name="Selker E.U."/>
            <person name="Shaw P.C."/>
            <person name="Stein D.C."/>
            <person name="Stoddard B.L."/>
            <person name="Szybalski W."/>
            <person name="Trautner T.A."/>
            <person name="Van Etten J.L."/>
            <person name="Vitor J.M."/>
            <person name="Wilson G.G."/>
            <person name="Xu S.Y."/>
        </authorList>
    </citation>
    <scope>NOMENCLATURE</scope>
</reference>
<reference key="5">
    <citation type="journal article" date="2002" name="J. Mol. Biol.">
        <title>Structure and activity of a thermostable thymine-DNA glycosylase: evidence for base twisting to remove mismatched normal DNA bases.</title>
        <authorList>
            <person name="Mol C.D."/>
            <person name="Arvai A.S."/>
            <person name="Begley T.J."/>
            <person name="Cunningham R.P."/>
            <person name="Tainer J.A."/>
        </authorList>
    </citation>
    <scope>X-RAY CRYSTALLOGRAPHY (2.0 ANGSTROMS)</scope>
    <scope>MUTAGENESIS OF GLU-42; ARG-47; TYR-126; ASP-144 AND ASN-146</scope>
</reference>
<organism>
    <name type="scientific">Methanothermobacter thermautotrophicus</name>
    <name type="common">Methanobacterium thermoformicicum</name>
    <dbReference type="NCBI Taxonomy" id="145262"/>
    <lineage>
        <taxon>Archaea</taxon>
        <taxon>Methanobacteriati</taxon>
        <taxon>Methanobacteriota</taxon>
        <taxon>Methanomada group</taxon>
        <taxon>Methanobacteria</taxon>
        <taxon>Methanobacteriales</taxon>
        <taxon>Methanobacteriaceae</taxon>
        <taxon>Methanothermobacter</taxon>
    </lineage>
</organism>
<sequence>MDDATNKKRKVFVSTILTFWNTDRRDFPWRHTRDPYVILITEILLRRTTAGHVKKIYDKFFVKYKCFEDILKTPKSEIAKDIKEIGLSNQRAEQLKELARVVINDYGGRVPRNRKAILDLPGVGKYTCAAVMCLAFGKKAAMVDANFVRVINRYFGGSYENLNYNHKALWELAETLVPGGKCRDFNLGLMDFSAIICAPRKPKCEKCGMSKLCSYYEKCST</sequence>
<accession>P29588</accession>
<comment type="function">
    <text evidence="3 4">DNA glycosylase that excises thymine from T/G mismatches and uracil from U/G mismatches (PubMed:11788726, PubMed:8895589). Acts as a repair enzyme able to counteract the mutagenic effect of spontaneous hydrolytic deamination of DNA 5-methylcytosine (5-meC) residues that leads to the formation of T/G mismatches (PubMed:8895589). May also repair U/G mismatches arising from hydrolytic deamination of DNA cytosine residues (PubMed:8895589). G/G, A/G, T/C and U/C are minor substrates (PubMed:11788726, PubMed:8895589).</text>
</comment>
<comment type="catalytic activity">
    <reaction evidence="3 4">
        <text>Hydrolyzes mismatched double-stranded DNA and polynucleotides, releasing free thymine.</text>
        <dbReference type="EC" id="3.2.2.29"/>
    </reaction>
</comment>
<comment type="cofactor">
    <cofactor evidence="1">
        <name>[4Fe-4S] cluster</name>
        <dbReference type="ChEBI" id="CHEBI:49883"/>
    </cofactor>
    <text evidence="1">Binds 1 [4Fe-4S] cluster. The cluster has a structural role.</text>
</comment>
<comment type="similarity">
    <text evidence="8">Belongs to the Nth/MutY family.</text>
</comment>
<keyword id="KW-0002">3D-structure</keyword>
<keyword id="KW-0004">4Fe-4S</keyword>
<keyword id="KW-0227">DNA damage</keyword>
<keyword id="KW-0234">DNA repair</keyword>
<keyword id="KW-0326">Glycosidase</keyword>
<keyword id="KW-0378">Hydrolase</keyword>
<keyword id="KW-0408">Iron</keyword>
<keyword id="KW-0411">Iron-sulfur</keyword>
<keyword id="KW-0479">Metal-binding</keyword>
<keyword id="KW-0614">Plasmid</keyword>
<evidence type="ECO:0000250" key="1">
    <source>
        <dbReference type="UniProtKB" id="P83847"/>
    </source>
</evidence>
<evidence type="ECO:0000269" key="2">
    <source>
    </source>
</evidence>
<evidence type="ECO:0000269" key="3">
    <source>
    </source>
</evidence>
<evidence type="ECO:0000269" key="4">
    <source>
    </source>
</evidence>
<evidence type="ECO:0000303" key="5">
    <source>
    </source>
</evidence>
<evidence type="ECO:0000303" key="6">
    <source>
    </source>
</evidence>
<evidence type="ECO:0000303" key="7">
    <source>
    </source>
</evidence>
<evidence type="ECO:0000305" key="8"/>
<evidence type="ECO:0007829" key="9">
    <source>
        <dbReference type="PDB" id="1KEA"/>
    </source>
</evidence>